<reference key="1">
    <citation type="journal article" date="2008" name="J. Biotechnol.">
        <title>The genome of Xanthomonas campestris pv. campestris B100 and its use for the reconstruction of metabolic pathways involved in xanthan biosynthesis.</title>
        <authorList>
            <person name="Vorhoelter F.-J."/>
            <person name="Schneiker S."/>
            <person name="Goesmann A."/>
            <person name="Krause L."/>
            <person name="Bekel T."/>
            <person name="Kaiser O."/>
            <person name="Linke B."/>
            <person name="Patschkowski T."/>
            <person name="Rueckert C."/>
            <person name="Schmid J."/>
            <person name="Sidhu V.K."/>
            <person name="Sieber V."/>
            <person name="Tauch A."/>
            <person name="Watt S.A."/>
            <person name="Weisshaar B."/>
            <person name="Becker A."/>
            <person name="Niehaus K."/>
            <person name="Puehler A."/>
        </authorList>
    </citation>
    <scope>NUCLEOTIDE SEQUENCE [LARGE SCALE GENOMIC DNA]</scope>
    <source>
        <strain>B100</strain>
    </source>
</reference>
<proteinExistence type="inferred from homology"/>
<accession>B0RYP5</accession>
<feature type="chain" id="PRO_1000119833" description="Oxygen-dependent coproporphyrinogen-III oxidase">
    <location>
        <begin position="1"/>
        <end position="299"/>
    </location>
</feature>
<feature type="region of interest" description="Important for dimerization" evidence="1">
    <location>
        <begin position="239"/>
        <end position="274"/>
    </location>
</feature>
<feature type="active site" description="Proton donor" evidence="1">
    <location>
        <position position="106"/>
    </location>
</feature>
<feature type="binding site" evidence="1">
    <location>
        <position position="92"/>
    </location>
    <ligand>
        <name>substrate</name>
    </ligand>
</feature>
<feature type="binding site" evidence="1">
    <location>
        <position position="96"/>
    </location>
    <ligand>
        <name>a divalent metal cation</name>
        <dbReference type="ChEBI" id="CHEBI:60240"/>
    </ligand>
</feature>
<feature type="binding site" evidence="1">
    <location>
        <position position="106"/>
    </location>
    <ligand>
        <name>a divalent metal cation</name>
        <dbReference type="ChEBI" id="CHEBI:60240"/>
    </ligand>
</feature>
<feature type="binding site" evidence="1">
    <location>
        <begin position="108"/>
        <end position="110"/>
    </location>
    <ligand>
        <name>substrate</name>
    </ligand>
</feature>
<feature type="binding site" evidence="1">
    <location>
        <position position="145"/>
    </location>
    <ligand>
        <name>a divalent metal cation</name>
        <dbReference type="ChEBI" id="CHEBI:60240"/>
    </ligand>
</feature>
<feature type="binding site" evidence="1">
    <location>
        <position position="175"/>
    </location>
    <ligand>
        <name>a divalent metal cation</name>
        <dbReference type="ChEBI" id="CHEBI:60240"/>
    </ligand>
</feature>
<feature type="binding site" evidence="1">
    <location>
        <begin position="257"/>
        <end position="259"/>
    </location>
    <ligand>
        <name>substrate</name>
    </ligand>
</feature>
<feature type="site" description="Important for dimerization" evidence="1">
    <location>
        <position position="175"/>
    </location>
</feature>
<gene>
    <name evidence="1" type="primary">hemF</name>
    <name type="ordered locus">xcc-b100_4212</name>
</gene>
<name>HEM6_XANCB</name>
<comment type="function">
    <text evidence="1">Involved in the heme biosynthesis. Catalyzes the aerobic oxidative decarboxylation of propionate groups of rings A and B of coproporphyrinogen-III to yield the vinyl groups in protoporphyrinogen-IX.</text>
</comment>
<comment type="catalytic activity">
    <reaction evidence="1">
        <text>coproporphyrinogen III + O2 + 2 H(+) = protoporphyrinogen IX + 2 CO2 + 2 H2O</text>
        <dbReference type="Rhea" id="RHEA:18257"/>
        <dbReference type="ChEBI" id="CHEBI:15377"/>
        <dbReference type="ChEBI" id="CHEBI:15378"/>
        <dbReference type="ChEBI" id="CHEBI:15379"/>
        <dbReference type="ChEBI" id="CHEBI:16526"/>
        <dbReference type="ChEBI" id="CHEBI:57307"/>
        <dbReference type="ChEBI" id="CHEBI:57309"/>
        <dbReference type="EC" id="1.3.3.3"/>
    </reaction>
</comment>
<comment type="cofactor">
    <cofactor evidence="1">
        <name>a divalent metal cation</name>
        <dbReference type="ChEBI" id="CHEBI:60240"/>
    </cofactor>
</comment>
<comment type="pathway">
    <text evidence="1">Porphyrin-containing compound metabolism; protoporphyrin-IX biosynthesis; protoporphyrinogen-IX from coproporphyrinogen-III (O2 route): step 1/1.</text>
</comment>
<comment type="subunit">
    <text evidence="1">Homodimer.</text>
</comment>
<comment type="subcellular location">
    <subcellularLocation>
        <location evidence="1">Cytoplasm</location>
    </subcellularLocation>
</comment>
<comment type="similarity">
    <text evidence="1">Belongs to the aerobic coproporphyrinogen-III oxidase family.</text>
</comment>
<sequence>MNEFDRVRDYLTDLQDRICAAVEAIDGKARFAEDLWQRAEGGGGRTRILRDGAVFEQAGIGFSDVSGARLPPSASAHRPELAGATWRACGVSLVFHPHNPHIPTTHANVRYFRAERDGEMVAAWFGGGFDLTPFYPVDEDVMHWHRTAQALCAPFGEERYAAHKRWCDEYFFLRHRDETRGVGGLFFDDLGQDFERDFAYQRAVGDGFLDAYLPIVERRKDTPYGEAERAFQLYRRGRYVEFNLVYDRGTLFGLQSGGRAESILMSLPPQVRWEYGFQPQPGSAEARLADYLIPRDWLG</sequence>
<evidence type="ECO:0000255" key="1">
    <source>
        <dbReference type="HAMAP-Rule" id="MF_00333"/>
    </source>
</evidence>
<protein>
    <recommendedName>
        <fullName evidence="1">Oxygen-dependent coproporphyrinogen-III oxidase</fullName>
        <shortName evidence="1">CPO</shortName>
        <shortName evidence="1">Coprogen oxidase</shortName>
        <shortName evidence="1">Coproporphyrinogenase</shortName>
        <ecNumber evidence="1">1.3.3.3</ecNumber>
    </recommendedName>
</protein>
<organism>
    <name type="scientific">Xanthomonas campestris pv. campestris (strain B100)</name>
    <dbReference type="NCBI Taxonomy" id="509169"/>
    <lineage>
        <taxon>Bacteria</taxon>
        <taxon>Pseudomonadati</taxon>
        <taxon>Pseudomonadota</taxon>
        <taxon>Gammaproteobacteria</taxon>
        <taxon>Lysobacterales</taxon>
        <taxon>Lysobacteraceae</taxon>
        <taxon>Xanthomonas</taxon>
    </lineage>
</organism>
<keyword id="KW-0963">Cytoplasm</keyword>
<keyword id="KW-0350">Heme biosynthesis</keyword>
<keyword id="KW-0479">Metal-binding</keyword>
<keyword id="KW-0560">Oxidoreductase</keyword>
<keyword id="KW-0627">Porphyrin biosynthesis</keyword>
<dbReference type="EC" id="1.3.3.3" evidence="1"/>
<dbReference type="EMBL" id="AM920689">
    <property type="protein sequence ID" value="CAP53581.1"/>
    <property type="molecule type" value="Genomic_DNA"/>
</dbReference>
<dbReference type="SMR" id="B0RYP5"/>
<dbReference type="KEGG" id="xca:xcc-b100_4212"/>
<dbReference type="HOGENOM" id="CLU_026169_0_1_6"/>
<dbReference type="UniPathway" id="UPA00251">
    <property type="reaction ID" value="UER00322"/>
</dbReference>
<dbReference type="Proteomes" id="UP000001188">
    <property type="component" value="Chromosome"/>
</dbReference>
<dbReference type="GO" id="GO:0005737">
    <property type="term" value="C:cytoplasm"/>
    <property type="evidence" value="ECO:0007669"/>
    <property type="project" value="UniProtKB-SubCell"/>
</dbReference>
<dbReference type="GO" id="GO:0004109">
    <property type="term" value="F:coproporphyrinogen oxidase activity"/>
    <property type="evidence" value="ECO:0007669"/>
    <property type="project" value="UniProtKB-UniRule"/>
</dbReference>
<dbReference type="GO" id="GO:0046872">
    <property type="term" value="F:metal ion binding"/>
    <property type="evidence" value="ECO:0007669"/>
    <property type="project" value="UniProtKB-KW"/>
</dbReference>
<dbReference type="GO" id="GO:0042803">
    <property type="term" value="F:protein homodimerization activity"/>
    <property type="evidence" value="ECO:0000250"/>
    <property type="project" value="UniProtKB"/>
</dbReference>
<dbReference type="GO" id="GO:0006782">
    <property type="term" value="P:protoporphyrinogen IX biosynthetic process"/>
    <property type="evidence" value="ECO:0007669"/>
    <property type="project" value="UniProtKB-UniRule"/>
</dbReference>
<dbReference type="FunFam" id="3.40.1500.10:FF:000001">
    <property type="entry name" value="Oxygen-dependent coproporphyrinogen-III oxidase"/>
    <property type="match status" value="1"/>
</dbReference>
<dbReference type="Gene3D" id="3.40.1500.10">
    <property type="entry name" value="Coproporphyrinogen III oxidase, aerobic"/>
    <property type="match status" value="1"/>
</dbReference>
<dbReference type="HAMAP" id="MF_00333">
    <property type="entry name" value="Coprogen_oxidas"/>
    <property type="match status" value="1"/>
</dbReference>
<dbReference type="InterPro" id="IPR001260">
    <property type="entry name" value="Coprogen_oxidase_aer"/>
</dbReference>
<dbReference type="InterPro" id="IPR036406">
    <property type="entry name" value="Coprogen_oxidase_aer_sf"/>
</dbReference>
<dbReference type="InterPro" id="IPR018375">
    <property type="entry name" value="Coprogen_oxidase_CS"/>
</dbReference>
<dbReference type="NCBIfam" id="NF003727">
    <property type="entry name" value="PRK05330.1"/>
    <property type="match status" value="1"/>
</dbReference>
<dbReference type="PANTHER" id="PTHR10755">
    <property type="entry name" value="COPROPORPHYRINOGEN III OXIDASE, MITOCHONDRIAL"/>
    <property type="match status" value="1"/>
</dbReference>
<dbReference type="PANTHER" id="PTHR10755:SF0">
    <property type="entry name" value="OXYGEN-DEPENDENT COPROPORPHYRINOGEN-III OXIDASE, MITOCHONDRIAL"/>
    <property type="match status" value="1"/>
</dbReference>
<dbReference type="Pfam" id="PF01218">
    <property type="entry name" value="Coprogen_oxidas"/>
    <property type="match status" value="1"/>
</dbReference>
<dbReference type="PIRSF" id="PIRSF000166">
    <property type="entry name" value="Coproporphyri_ox"/>
    <property type="match status" value="1"/>
</dbReference>
<dbReference type="PRINTS" id="PR00073">
    <property type="entry name" value="COPRGNOXDASE"/>
</dbReference>
<dbReference type="SUPFAM" id="SSF102886">
    <property type="entry name" value="Coproporphyrinogen III oxidase"/>
    <property type="match status" value="1"/>
</dbReference>
<dbReference type="PROSITE" id="PS01021">
    <property type="entry name" value="COPROGEN_OXIDASE"/>
    <property type="match status" value="1"/>
</dbReference>